<feature type="signal peptide" evidence="1">
    <location>
        <begin position="1"/>
        <end position="27"/>
    </location>
</feature>
<feature type="chain" id="PRO_0000352423" description="Uncharacterized protein DDB_G0281771">
    <location>
        <begin position="28"/>
        <end position="156"/>
    </location>
</feature>
<feature type="glycosylation site" description="N-linked (GlcNAc...) asparagine" evidence="1">
    <location>
        <position position="20"/>
    </location>
</feature>
<feature type="glycosylation site" description="N-linked (GlcNAc...) asparagine" evidence="1">
    <location>
        <position position="83"/>
    </location>
</feature>
<feature type="glycosylation site" description="N-linked (GlcNAc...) asparagine" evidence="1">
    <location>
        <position position="103"/>
    </location>
</feature>
<feature type="glycosylation site" description="N-linked (GlcNAc...) asparagine" evidence="1">
    <location>
        <position position="106"/>
    </location>
</feature>
<feature type="glycosylation site" description="N-linked (GlcNAc...) asparagine" evidence="1">
    <location>
        <position position="134"/>
    </location>
</feature>
<evidence type="ECO:0000255" key="1"/>
<evidence type="ECO:0000305" key="2"/>
<protein>
    <recommendedName>
        <fullName>Uncharacterized protein DDB_G0281771</fullName>
    </recommendedName>
</protein>
<gene>
    <name type="ORF">DDB_G0281771</name>
</gene>
<organism>
    <name type="scientific">Dictyostelium discoideum</name>
    <name type="common">Social amoeba</name>
    <dbReference type="NCBI Taxonomy" id="44689"/>
    <lineage>
        <taxon>Eukaryota</taxon>
        <taxon>Amoebozoa</taxon>
        <taxon>Evosea</taxon>
        <taxon>Eumycetozoa</taxon>
        <taxon>Dictyostelia</taxon>
        <taxon>Dictyosteliales</taxon>
        <taxon>Dictyosteliaceae</taxon>
        <taxon>Dictyostelium</taxon>
    </lineage>
</organism>
<accession>Q54TG1</accession>
<name>Y4660_DICDI</name>
<sequence>MKLLVLRLILIISTIFVLLNLSCMVNGLSLKRKSIVSDHWVNVANSIDGKTLTYNTIANKVDFLQFRVDREDESRILNDMYINVTSVKAARFGIFFNNFNPANSSNDSRGRAGYCPIWFATCGAETPYFSLGSNNSYTSDLTFTVTVRDEIKLCDF</sequence>
<reference key="1">
    <citation type="journal article" date="2005" name="Nature">
        <title>The genome of the social amoeba Dictyostelium discoideum.</title>
        <authorList>
            <person name="Eichinger L."/>
            <person name="Pachebat J.A."/>
            <person name="Gloeckner G."/>
            <person name="Rajandream M.A."/>
            <person name="Sucgang R."/>
            <person name="Berriman M."/>
            <person name="Song J."/>
            <person name="Olsen R."/>
            <person name="Szafranski K."/>
            <person name="Xu Q."/>
            <person name="Tunggal B."/>
            <person name="Kummerfeld S."/>
            <person name="Madera M."/>
            <person name="Konfortov B.A."/>
            <person name="Rivero F."/>
            <person name="Bankier A.T."/>
            <person name="Lehmann R."/>
            <person name="Hamlin N."/>
            <person name="Davies R."/>
            <person name="Gaudet P."/>
            <person name="Fey P."/>
            <person name="Pilcher K."/>
            <person name="Chen G."/>
            <person name="Saunders D."/>
            <person name="Sodergren E.J."/>
            <person name="Davis P."/>
            <person name="Kerhornou A."/>
            <person name="Nie X."/>
            <person name="Hall N."/>
            <person name="Anjard C."/>
            <person name="Hemphill L."/>
            <person name="Bason N."/>
            <person name="Farbrother P."/>
            <person name="Desany B."/>
            <person name="Just E."/>
            <person name="Morio T."/>
            <person name="Rost R."/>
            <person name="Churcher C.M."/>
            <person name="Cooper J."/>
            <person name="Haydock S."/>
            <person name="van Driessche N."/>
            <person name="Cronin A."/>
            <person name="Goodhead I."/>
            <person name="Muzny D.M."/>
            <person name="Mourier T."/>
            <person name="Pain A."/>
            <person name="Lu M."/>
            <person name="Harper D."/>
            <person name="Lindsay R."/>
            <person name="Hauser H."/>
            <person name="James K.D."/>
            <person name="Quiles M."/>
            <person name="Madan Babu M."/>
            <person name="Saito T."/>
            <person name="Buchrieser C."/>
            <person name="Wardroper A."/>
            <person name="Felder M."/>
            <person name="Thangavelu M."/>
            <person name="Johnson D."/>
            <person name="Knights A."/>
            <person name="Loulseged H."/>
            <person name="Mungall K.L."/>
            <person name="Oliver K."/>
            <person name="Price C."/>
            <person name="Quail M.A."/>
            <person name="Urushihara H."/>
            <person name="Hernandez J."/>
            <person name="Rabbinowitsch E."/>
            <person name="Steffen D."/>
            <person name="Sanders M."/>
            <person name="Ma J."/>
            <person name="Kohara Y."/>
            <person name="Sharp S."/>
            <person name="Simmonds M.N."/>
            <person name="Spiegler S."/>
            <person name="Tivey A."/>
            <person name="Sugano S."/>
            <person name="White B."/>
            <person name="Walker D."/>
            <person name="Woodward J.R."/>
            <person name="Winckler T."/>
            <person name="Tanaka Y."/>
            <person name="Shaulsky G."/>
            <person name="Schleicher M."/>
            <person name="Weinstock G.M."/>
            <person name="Rosenthal A."/>
            <person name="Cox E.C."/>
            <person name="Chisholm R.L."/>
            <person name="Gibbs R.A."/>
            <person name="Loomis W.F."/>
            <person name="Platzer M."/>
            <person name="Kay R.R."/>
            <person name="Williams J.G."/>
            <person name="Dear P.H."/>
            <person name="Noegel A.A."/>
            <person name="Barrell B.G."/>
            <person name="Kuspa A."/>
        </authorList>
    </citation>
    <scope>NUCLEOTIDE SEQUENCE [LARGE SCALE GENOMIC DNA]</scope>
    <source>
        <strain>AX4</strain>
    </source>
</reference>
<dbReference type="EMBL" id="AAFI02000042">
    <property type="protein sequence ID" value="EAL66647.1"/>
    <property type="molecule type" value="Genomic_DNA"/>
</dbReference>
<dbReference type="RefSeq" id="XP_640630.1">
    <property type="nucleotide sequence ID" value="XM_635538.1"/>
</dbReference>
<dbReference type="SMR" id="Q54TG1"/>
<dbReference type="FunCoup" id="Q54TG1">
    <property type="interactions" value="877"/>
</dbReference>
<dbReference type="GlyGen" id="Q54TG1">
    <property type="glycosylation" value="5 sites"/>
</dbReference>
<dbReference type="PaxDb" id="44689-DDB0204660"/>
<dbReference type="EnsemblProtists" id="EAL66647">
    <property type="protein sequence ID" value="EAL66647"/>
    <property type="gene ID" value="DDB_G0281771"/>
</dbReference>
<dbReference type="GeneID" id="8623241"/>
<dbReference type="KEGG" id="ddi:DDB_G0281771"/>
<dbReference type="dictyBase" id="DDB_G0281771"/>
<dbReference type="VEuPathDB" id="AmoebaDB:DDB_G0281771"/>
<dbReference type="eggNOG" id="ENOG502RI1S">
    <property type="taxonomic scope" value="Eukaryota"/>
</dbReference>
<dbReference type="HOGENOM" id="CLU_1689979_0_0_1"/>
<dbReference type="InParanoid" id="Q54TG1"/>
<dbReference type="OMA" id="HWVNVAN"/>
<dbReference type="PRO" id="PR:Q54TG1"/>
<dbReference type="Proteomes" id="UP000002195">
    <property type="component" value="Chromosome 3"/>
</dbReference>
<dbReference type="GO" id="GO:0005576">
    <property type="term" value="C:extracellular region"/>
    <property type="evidence" value="ECO:0007669"/>
    <property type="project" value="UniProtKB-SubCell"/>
</dbReference>
<comment type="subcellular location">
    <subcellularLocation>
        <location evidence="2">Secreted</location>
    </subcellularLocation>
</comment>
<keyword id="KW-0325">Glycoprotein</keyword>
<keyword id="KW-1185">Reference proteome</keyword>
<keyword id="KW-0964">Secreted</keyword>
<keyword id="KW-0732">Signal</keyword>
<proteinExistence type="inferred from homology"/>